<sequence length="184" mass="21646">MDKFLIDVIVEIPKNSKIKYEYDRQTGQIRVDRILFGSESYPQNYGFIKNTLDWDGDELDCFIFADQPFLPATVVPTRIVGALEMIDDGEIDTKLLGVIDCDPRYKEINQISDLPKHRIEEILIFLKTYKLLQKKTVIIKGLKDVCWAKKEYEICLQLMKDYGHLSKDQFIQKMQILHPEHYQK</sequence>
<feature type="chain" id="PRO_0000137507" description="Inorganic pyrophosphatase">
    <location>
        <begin position="1"/>
        <end position="184"/>
    </location>
</feature>
<feature type="binding site" evidence="1">
    <location>
        <position position="19"/>
    </location>
    <ligand>
        <name>substrate</name>
    </ligand>
</feature>
<feature type="binding site" evidence="1">
    <location>
        <position position="33"/>
    </location>
    <ligand>
        <name>substrate</name>
    </ligand>
</feature>
<feature type="binding site" evidence="1">
    <location>
        <position position="45"/>
    </location>
    <ligand>
        <name>substrate</name>
    </ligand>
</feature>
<feature type="binding site" evidence="1">
    <location>
        <position position="55"/>
    </location>
    <ligand>
        <name>Mg(2+)</name>
        <dbReference type="ChEBI" id="CHEBI:18420"/>
        <label>1</label>
    </ligand>
</feature>
<feature type="binding site" evidence="1">
    <location>
        <position position="60"/>
    </location>
    <ligand>
        <name>Mg(2+)</name>
        <dbReference type="ChEBI" id="CHEBI:18420"/>
        <label>1</label>
    </ligand>
</feature>
<feature type="binding site" evidence="1">
    <location>
        <position position="60"/>
    </location>
    <ligand>
        <name>Mg(2+)</name>
        <dbReference type="ChEBI" id="CHEBI:18420"/>
        <label>2</label>
    </ligand>
</feature>
<feature type="binding site" evidence="1">
    <location>
        <position position="92"/>
    </location>
    <ligand>
        <name>Mg(2+)</name>
        <dbReference type="ChEBI" id="CHEBI:18420"/>
        <label>1</label>
    </ligand>
</feature>
<feature type="binding site" evidence="1">
    <location>
        <position position="129"/>
    </location>
    <ligand>
        <name>substrate</name>
    </ligand>
</feature>
<comment type="function">
    <text evidence="1">Catalyzes the hydrolysis of inorganic pyrophosphate (PPi) forming two phosphate ions.</text>
</comment>
<comment type="catalytic activity">
    <reaction evidence="1">
        <text>diphosphate + H2O = 2 phosphate + H(+)</text>
        <dbReference type="Rhea" id="RHEA:24576"/>
        <dbReference type="ChEBI" id="CHEBI:15377"/>
        <dbReference type="ChEBI" id="CHEBI:15378"/>
        <dbReference type="ChEBI" id="CHEBI:33019"/>
        <dbReference type="ChEBI" id="CHEBI:43474"/>
        <dbReference type="EC" id="3.6.1.1"/>
    </reaction>
</comment>
<comment type="cofactor">
    <cofactor evidence="1">
        <name>Mg(2+)</name>
        <dbReference type="ChEBI" id="CHEBI:18420"/>
    </cofactor>
</comment>
<comment type="subunit">
    <text evidence="1">Homohexamer.</text>
</comment>
<comment type="subcellular location">
    <subcellularLocation>
        <location evidence="1">Cytoplasm</location>
    </subcellularLocation>
</comment>
<comment type="similarity">
    <text evidence="1">Belongs to the PPase family.</text>
</comment>
<proteinExistence type="inferred from homology"/>
<name>IPYR_MYCGE</name>
<reference key="1">
    <citation type="journal article" date="1995" name="Science">
        <title>The minimal gene complement of Mycoplasma genitalium.</title>
        <authorList>
            <person name="Fraser C.M."/>
            <person name="Gocayne J.D."/>
            <person name="White O."/>
            <person name="Adams M.D."/>
            <person name="Clayton R.A."/>
            <person name="Fleischmann R.D."/>
            <person name="Bult C.J."/>
            <person name="Kerlavage A.R."/>
            <person name="Sutton G.G."/>
            <person name="Kelley J.M."/>
            <person name="Fritchman J.L."/>
            <person name="Weidman J.F."/>
            <person name="Small K.V."/>
            <person name="Sandusky M."/>
            <person name="Fuhrmann J.L."/>
            <person name="Nguyen D.T."/>
            <person name="Utterback T.R."/>
            <person name="Saudek D.M."/>
            <person name="Phillips C.A."/>
            <person name="Merrick J.M."/>
            <person name="Tomb J.-F."/>
            <person name="Dougherty B.A."/>
            <person name="Bott K.F."/>
            <person name="Hu P.-C."/>
            <person name="Lucier T.S."/>
            <person name="Peterson S.N."/>
            <person name="Smith H.O."/>
            <person name="Hutchison C.A. III"/>
            <person name="Venter J.C."/>
        </authorList>
    </citation>
    <scope>NUCLEOTIDE SEQUENCE [LARGE SCALE GENOMIC DNA]</scope>
    <source>
        <strain>ATCC 33530 / DSM 19775 / NCTC 10195 / G37</strain>
    </source>
</reference>
<keyword id="KW-0963">Cytoplasm</keyword>
<keyword id="KW-0378">Hydrolase</keyword>
<keyword id="KW-0460">Magnesium</keyword>
<keyword id="KW-0479">Metal-binding</keyword>
<keyword id="KW-1185">Reference proteome</keyword>
<protein>
    <recommendedName>
        <fullName evidence="1">Inorganic pyrophosphatase</fullName>
        <ecNumber evidence="1">3.6.1.1</ecNumber>
    </recommendedName>
    <alternativeName>
        <fullName evidence="1">Pyrophosphate phospho-hydrolase</fullName>
        <shortName evidence="1">PPase</shortName>
    </alternativeName>
</protein>
<accession>P47593</accession>
<dbReference type="EC" id="3.6.1.1" evidence="1"/>
<dbReference type="EMBL" id="L43967">
    <property type="protein sequence ID" value="AAC71576.1"/>
    <property type="molecule type" value="Genomic_DNA"/>
</dbReference>
<dbReference type="PIR" id="H64238">
    <property type="entry name" value="H64238"/>
</dbReference>
<dbReference type="RefSeq" id="WP_009885809.1">
    <property type="nucleotide sequence ID" value="NC_000908.2"/>
</dbReference>
<dbReference type="SMR" id="P47593"/>
<dbReference type="STRING" id="243273.MG_351"/>
<dbReference type="GeneID" id="88282532"/>
<dbReference type="KEGG" id="mge:MG_351"/>
<dbReference type="eggNOG" id="COG0221">
    <property type="taxonomic scope" value="Bacteria"/>
</dbReference>
<dbReference type="HOGENOM" id="CLU_073198_1_2_14"/>
<dbReference type="InParanoid" id="P47593"/>
<dbReference type="OrthoDB" id="5187599at2"/>
<dbReference type="BioCyc" id="MGEN243273:G1GJ2-442-MONOMER"/>
<dbReference type="Proteomes" id="UP000000807">
    <property type="component" value="Chromosome"/>
</dbReference>
<dbReference type="GO" id="GO:0005829">
    <property type="term" value="C:cytosol"/>
    <property type="evidence" value="ECO:0000318"/>
    <property type="project" value="GO_Central"/>
</dbReference>
<dbReference type="GO" id="GO:0004427">
    <property type="term" value="F:inorganic diphosphate phosphatase activity"/>
    <property type="evidence" value="ECO:0000318"/>
    <property type="project" value="GO_Central"/>
</dbReference>
<dbReference type="GO" id="GO:0000287">
    <property type="term" value="F:magnesium ion binding"/>
    <property type="evidence" value="ECO:0000318"/>
    <property type="project" value="GO_Central"/>
</dbReference>
<dbReference type="GO" id="GO:0006796">
    <property type="term" value="P:phosphate-containing compound metabolic process"/>
    <property type="evidence" value="ECO:0000318"/>
    <property type="project" value="GO_Central"/>
</dbReference>
<dbReference type="CDD" id="cd00412">
    <property type="entry name" value="pyrophosphatase"/>
    <property type="match status" value="1"/>
</dbReference>
<dbReference type="Gene3D" id="3.90.80.10">
    <property type="entry name" value="Inorganic pyrophosphatase"/>
    <property type="match status" value="1"/>
</dbReference>
<dbReference type="HAMAP" id="MF_00209">
    <property type="entry name" value="Inorganic_PPase"/>
    <property type="match status" value="1"/>
</dbReference>
<dbReference type="InterPro" id="IPR008162">
    <property type="entry name" value="Pyrophosphatase"/>
</dbReference>
<dbReference type="InterPro" id="IPR036649">
    <property type="entry name" value="Pyrophosphatase_sf"/>
</dbReference>
<dbReference type="NCBIfam" id="NF002578">
    <property type="entry name" value="PRK02230.1"/>
    <property type="match status" value="1"/>
</dbReference>
<dbReference type="PANTHER" id="PTHR10286">
    <property type="entry name" value="INORGANIC PYROPHOSPHATASE"/>
    <property type="match status" value="1"/>
</dbReference>
<dbReference type="Pfam" id="PF00719">
    <property type="entry name" value="Pyrophosphatase"/>
    <property type="match status" value="1"/>
</dbReference>
<dbReference type="SUPFAM" id="SSF50324">
    <property type="entry name" value="Inorganic pyrophosphatase"/>
    <property type="match status" value="1"/>
</dbReference>
<dbReference type="PROSITE" id="PS00387">
    <property type="entry name" value="PPASE"/>
    <property type="match status" value="1"/>
</dbReference>
<gene>
    <name evidence="1" type="primary">ppa</name>
    <name type="ordered locus">MG351</name>
</gene>
<organism>
    <name type="scientific">Mycoplasma genitalium (strain ATCC 33530 / DSM 19775 / NCTC 10195 / G37)</name>
    <name type="common">Mycoplasmoides genitalium</name>
    <dbReference type="NCBI Taxonomy" id="243273"/>
    <lineage>
        <taxon>Bacteria</taxon>
        <taxon>Bacillati</taxon>
        <taxon>Mycoplasmatota</taxon>
        <taxon>Mycoplasmoidales</taxon>
        <taxon>Mycoplasmoidaceae</taxon>
        <taxon>Mycoplasmoides</taxon>
    </lineage>
</organism>
<evidence type="ECO:0000255" key="1">
    <source>
        <dbReference type="HAMAP-Rule" id="MF_00209"/>
    </source>
</evidence>